<protein>
    <recommendedName>
        <fullName>Zona pellucida sperm-binding protein 2</fullName>
    </recommendedName>
    <alternativeName>
        <fullName>Zona pellucida glycoprotein 2</fullName>
        <shortName>Zp-2</shortName>
    </alternativeName>
    <alternativeName>
        <fullName>Zona pellucida protein A</fullName>
    </alternativeName>
    <component>
        <recommendedName>
            <fullName>Processed zona pellucida sperm-binding protein 2</fullName>
        </recommendedName>
    </component>
</protein>
<organism>
    <name type="scientific">Homo sapiens</name>
    <name type="common">Human</name>
    <dbReference type="NCBI Taxonomy" id="9606"/>
    <lineage>
        <taxon>Eukaryota</taxon>
        <taxon>Metazoa</taxon>
        <taxon>Chordata</taxon>
        <taxon>Craniata</taxon>
        <taxon>Vertebrata</taxon>
        <taxon>Euteleostomi</taxon>
        <taxon>Mammalia</taxon>
        <taxon>Eutheria</taxon>
        <taxon>Euarchontoglires</taxon>
        <taxon>Primates</taxon>
        <taxon>Haplorrhini</taxon>
        <taxon>Catarrhini</taxon>
        <taxon>Hominidae</taxon>
        <taxon>Homo</taxon>
    </lineage>
</organism>
<reference key="1">
    <citation type="journal article" date="1993" name="Dev. Biol.">
        <title>Conservation of mammalian secondary sperm receptor genes enables the promoter of the human gene to function in mouse oocytes.</title>
        <authorList>
            <person name="Liang L.-F."/>
            <person name="Dean J."/>
        </authorList>
    </citation>
    <scope>NUCLEOTIDE SEQUENCE [MRNA] (ISOFORM 1)</scope>
    <source>
        <tissue>Ovary</tissue>
    </source>
</reference>
<reference key="2">
    <citation type="journal article" date="2004" name="Nat. Genet.">
        <title>Complete sequencing and characterization of 21,243 full-length human cDNAs.</title>
        <authorList>
            <person name="Ota T."/>
            <person name="Suzuki Y."/>
            <person name="Nishikawa T."/>
            <person name="Otsuki T."/>
            <person name="Sugiyama T."/>
            <person name="Irie R."/>
            <person name="Wakamatsu A."/>
            <person name="Hayashi K."/>
            <person name="Sato H."/>
            <person name="Nagai K."/>
            <person name="Kimura K."/>
            <person name="Makita H."/>
            <person name="Sekine M."/>
            <person name="Obayashi M."/>
            <person name="Nishi T."/>
            <person name="Shibahara T."/>
            <person name="Tanaka T."/>
            <person name="Ishii S."/>
            <person name="Yamamoto J."/>
            <person name="Saito K."/>
            <person name="Kawai Y."/>
            <person name="Isono Y."/>
            <person name="Nakamura Y."/>
            <person name="Nagahari K."/>
            <person name="Murakami K."/>
            <person name="Yasuda T."/>
            <person name="Iwayanagi T."/>
            <person name="Wagatsuma M."/>
            <person name="Shiratori A."/>
            <person name="Sudo H."/>
            <person name="Hosoiri T."/>
            <person name="Kaku Y."/>
            <person name="Kodaira H."/>
            <person name="Kondo H."/>
            <person name="Sugawara M."/>
            <person name="Takahashi M."/>
            <person name="Kanda K."/>
            <person name="Yokoi T."/>
            <person name="Furuya T."/>
            <person name="Kikkawa E."/>
            <person name="Omura Y."/>
            <person name="Abe K."/>
            <person name="Kamihara K."/>
            <person name="Katsuta N."/>
            <person name="Sato K."/>
            <person name="Tanikawa M."/>
            <person name="Yamazaki M."/>
            <person name="Ninomiya K."/>
            <person name="Ishibashi T."/>
            <person name="Yamashita H."/>
            <person name="Murakawa K."/>
            <person name="Fujimori K."/>
            <person name="Tanai H."/>
            <person name="Kimata M."/>
            <person name="Watanabe M."/>
            <person name="Hiraoka S."/>
            <person name="Chiba Y."/>
            <person name="Ishida S."/>
            <person name="Ono Y."/>
            <person name="Takiguchi S."/>
            <person name="Watanabe S."/>
            <person name="Yosida M."/>
            <person name="Hotuta T."/>
            <person name="Kusano J."/>
            <person name="Kanehori K."/>
            <person name="Takahashi-Fujii A."/>
            <person name="Hara H."/>
            <person name="Tanase T.-O."/>
            <person name="Nomura Y."/>
            <person name="Togiya S."/>
            <person name="Komai F."/>
            <person name="Hara R."/>
            <person name="Takeuchi K."/>
            <person name="Arita M."/>
            <person name="Imose N."/>
            <person name="Musashino K."/>
            <person name="Yuuki H."/>
            <person name="Oshima A."/>
            <person name="Sasaki N."/>
            <person name="Aotsuka S."/>
            <person name="Yoshikawa Y."/>
            <person name="Matsunawa H."/>
            <person name="Ichihara T."/>
            <person name="Shiohata N."/>
            <person name="Sano S."/>
            <person name="Moriya S."/>
            <person name="Momiyama H."/>
            <person name="Satoh N."/>
            <person name="Takami S."/>
            <person name="Terashima Y."/>
            <person name="Suzuki O."/>
            <person name="Nakagawa S."/>
            <person name="Senoh A."/>
            <person name="Mizoguchi H."/>
            <person name="Goto Y."/>
            <person name="Shimizu F."/>
            <person name="Wakebe H."/>
            <person name="Hishigaki H."/>
            <person name="Watanabe T."/>
            <person name="Sugiyama A."/>
            <person name="Takemoto M."/>
            <person name="Kawakami B."/>
            <person name="Yamazaki M."/>
            <person name="Watanabe K."/>
            <person name="Kumagai A."/>
            <person name="Itakura S."/>
            <person name="Fukuzumi Y."/>
            <person name="Fujimori Y."/>
            <person name="Komiyama M."/>
            <person name="Tashiro H."/>
            <person name="Tanigami A."/>
            <person name="Fujiwara T."/>
            <person name="Ono T."/>
            <person name="Yamada K."/>
            <person name="Fujii Y."/>
            <person name="Ozaki K."/>
            <person name="Hirao M."/>
            <person name="Ohmori Y."/>
            <person name="Kawabata A."/>
            <person name="Hikiji T."/>
            <person name="Kobatake N."/>
            <person name="Inagaki H."/>
            <person name="Ikema Y."/>
            <person name="Okamoto S."/>
            <person name="Okitani R."/>
            <person name="Kawakami T."/>
            <person name="Noguchi S."/>
            <person name="Itoh T."/>
            <person name="Shigeta K."/>
            <person name="Senba T."/>
            <person name="Matsumura K."/>
            <person name="Nakajima Y."/>
            <person name="Mizuno T."/>
            <person name="Morinaga M."/>
            <person name="Sasaki M."/>
            <person name="Togashi T."/>
            <person name="Oyama M."/>
            <person name="Hata H."/>
            <person name="Watanabe M."/>
            <person name="Komatsu T."/>
            <person name="Mizushima-Sugano J."/>
            <person name="Satoh T."/>
            <person name="Shirai Y."/>
            <person name="Takahashi Y."/>
            <person name="Nakagawa K."/>
            <person name="Okumura K."/>
            <person name="Nagase T."/>
            <person name="Nomura N."/>
            <person name="Kikuchi H."/>
            <person name="Masuho Y."/>
            <person name="Yamashita R."/>
            <person name="Nakai K."/>
            <person name="Yada T."/>
            <person name="Nakamura Y."/>
            <person name="Ohara O."/>
            <person name="Isogai T."/>
            <person name="Sugano S."/>
        </authorList>
    </citation>
    <scope>NUCLEOTIDE SEQUENCE [LARGE SCALE MRNA] (ISOFORM 1)</scope>
    <source>
        <tissue>Cerebellum</tissue>
    </source>
</reference>
<reference key="3">
    <citation type="journal article" date="2004" name="Nature">
        <title>The sequence and analysis of duplication-rich human chromosome 16.</title>
        <authorList>
            <person name="Martin J."/>
            <person name="Han C."/>
            <person name="Gordon L.A."/>
            <person name="Terry A."/>
            <person name="Prabhakar S."/>
            <person name="She X."/>
            <person name="Xie G."/>
            <person name="Hellsten U."/>
            <person name="Chan Y.M."/>
            <person name="Altherr M."/>
            <person name="Couronne O."/>
            <person name="Aerts A."/>
            <person name="Bajorek E."/>
            <person name="Black S."/>
            <person name="Blumer H."/>
            <person name="Branscomb E."/>
            <person name="Brown N.C."/>
            <person name="Bruno W.J."/>
            <person name="Buckingham J.M."/>
            <person name="Callen D.F."/>
            <person name="Campbell C.S."/>
            <person name="Campbell M.L."/>
            <person name="Campbell E.W."/>
            <person name="Caoile C."/>
            <person name="Challacombe J.F."/>
            <person name="Chasteen L.A."/>
            <person name="Chertkov O."/>
            <person name="Chi H.C."/>
            <person name="Christensen M."/>
            <person name="Clark L.M."/>
            <person name="Cohn J.D."/>
            <person name="Denys M."/>
            <person name="Detter J.C."/>
            <person name="Dickson M."/>
            <person name="Dimitrijevic-Bussod M."/>
            <person name="Escobar J."/>
            <person name="Fawcett J.J."/>
            <person name="Flowers D."/>
            <person name="Fotopulos D."/>
            <person name="Glavina T."/>
            <person name="Gomez M."/>
            <person name="Gonzales E."/>
            <person name="Goodstein D."/>
            <person name="Goodwin L.A."/>
            <person name="Grady D.L."/>
            <person name="Grigoriev I."/>
            <person name="Groza M."/>
            <person name="Hammon N."/>
            <person name="Hawkins T."/>
            <person name="Haydu L."/>
            <person name="Hildebrand C.E."/>
            <person name="Huang W."/>
            <person name="Israni S."/>
            <person name="Jett J."/>
            <person name="Jewett P.B."/>
            <person name="Kadner K."/>
            <person name="Kimball H."/>
            <person name="Kobayashi A."/>
            <person name="Krawczyk M.-C."/>
            <person name="Leyba T."/>
            <person name="Longmire J.L."/>
            <person name="Lopez F."/>
            <person name="Lou Y."/>
            <person name="Lowry S."/>
            <person name="Ludeman T."/>
            <person name="Manohar C.F."/>
            <person name="Mark G.A."/>
            <person name="McMurray K.L."/>
            <person name="Meincke L.J."/>
            <person name="Morgan J."/>
            <person name="Moyzis R.K."/>
            <person name="Mundt M.O."/>
            <person name="Munk A.C."/>
            <person name="Nandkeshwar R.D."/>
            <person name="Pitluck S."/>
            <person name="Pollard M."/>
            <person name="Predki P."/>
            <person name="Parson-Quintana B."/>
            <person name="Ramirez L."/>
            <person name="Rash S."/>
            <person name="Retterer J."/>
            <person name="Ricke D.O."/>
            <person name="Robinson D.L."/>
            <person name="Rodriguez A."/>
            <person name="Salamov A."/>
            <person name="Saunders E.H."/>
            <person name="Scott D."/>
            <person name="Shough T."/>
            <person name="Stallings R.L."/>
            <person name="Stalvey M."/>
            <person name="Sutherland R.D."/>
            <person name="Tapia R."/>
            <person name="Tesmer J.G."/>
            <person name="Thayer N."/>
            <person name="Thompson L.S."/>
            <person name="Tice H."/>
            <person name="Torney D.C."/>
            <person name="Tran-Gyamfi M."/>
            <person name="Tsai M."/>
            <person name="Ulanovsky L.E."/>
            <person name="Ustaszewska A."/>
            <person name="Vo N."/>
            <person name="White P.S."/>
            <person name="Williams A.L."/>
            <person name="Wills P.L."/>
            <person name="Wu J.-R."/>
            <person name="Wu K."/>
            <person name="Yang J."/>
            <person name="DeJong P."/>
            <person name="Bruce D."/>
            <person name="Doggett N.A."/>
            <person name="Deaven L."/>
            <person name="Schmutz J."/>
            <person name="Grimwood J."/>
            <person name="Richardson P."/>
            <person name="Rokhsar D.S."/>
            <person name="Eichler E.E."/>
            <person name="Gilna P."/>
            <person name="Lucas S.M."/>
            <person name="Myers R.M."/>
            <person name="Rubin E.M."/>
            <person name="Pennacchio L.A."/>
        </authorList>
    </citation>
    <scope>NUCLEOTIDE SEQUENCE [LARGE SCALE GENOMIC DNA]</scope>
</reference>
<reference key="4">
    <citation type="submission" date="2005-07" db="EMBL/GenBank/DDBJ databases">
        <authorList>
            <person name="Mural R.J."/>
            <person name="Istrail S."/>
            <person name="Sutton G.G."/>
            <person name="Florea L."/>
            <person name="Halpern A.L."/>
            <person name="Mobarry C.M."/>
            <person name="Lippert R."/>
            <person name="Walenz B."/>
            <person name="Shatkay H."/>
            <person name="Dew I."/>
            <person name="Miller J.R."/>
            <person name="Flanigan M.J."/>
            <person name="Edwards N.J."/>
            <person name="Bolanos R."/>
            <person name="Fasulo D."/>
            <person name="Halldorsson B.V."/>
            <person name="Hannenhalli S."/>
            <person name="Turner R."/>
            <person name="Yooseph S."/>
            <person name="Lu F."/>
            <person name="Nusskern D.R."/>
            <person name="Shue B.C."/>
            <person name="Zheng X.H."/>
            <person name="Zhong F."/>
            <person name="Delcher A.L."/>
            <person name="Huson D.H."/>
            <person name="Kravitz S.A."/>
            <person name="Mouchard L."/>
            <person name="Reinert K."/>
            <person name="Remington K.A."/>
            <person name="Clark A.G."/>
            <person name="Waterman M.S."/>
            <person name="Eichler E.E."/>
            <person name="Adams M.D."/>
            <person name="Hunkapiller M.W."/>
            <person name="Myers E.W."/>
            <person name="Venter J.C."/>
        </authorList>
    </citation>
    <scope>NUCLEOTIDE SEQUENCE [LARGE SCALE GENOMIC DNA]</scope>
</reference>
<reference key="5">
    <citation type="journal article" date="2004" name="Genome Res.">
        <title>The status, quality, and expansion of the NIH full-length cDNA project: the Mammalian Gene Collection (MGC).</title>
        <authorList>
            <consortium name="The MGC Project Team"/>
        </authorList>
    </citation>
    <scope>NUCLEOTIDE SEQUENCE [LARGE SCALE MRNA] (ISOFORMS 1 AND 2)</scope>
    <scope>VARIANT VAL-36</scope>
</reference>
<reference key="6">
    <citation type="journal article" date="2017" name="Am. J. Hum. Genet.">
        <title>A recurrent missense mutation in ZP3 causes empty follicle syndrome and female infertility.</title>
        <authorList>
            <person name="Chen T."/>
            <person name="Bian Y."/>
            <person name="Liu X."/>
            <person name="Zhao S."/>
            <person name="Wu K."/>
            <person name="Yan L."/>
            <person name="Li M."/>
            <person name="Yang Z."/>
            <person name="Liu H."/>
            <person name="Zhao H."/>
            <person name="Chen Z.J."/>
        </authorList>
    </citation>
    <scope>INTERACTION WITH ZP3</scope>
</reference>
<reference key="7">
    <citation type="journal article" date="2019" name="Genet. Med.">
        <title>ZP2 pathogenic variants cause in vitro fertilization failure and female infertility.</title>
        <authorList>
            <person name="Dai C."/>
            <person name="Hu L."/>
            <person name="Gong F."/>
            <person name="Tan Y."/>
            <person name="Cai S."/>
            <person name="Zhang S."/>
            <person name="Dai J."/>
            <person name="Lu C."/>
            <person name="Chen J."/>
            <person name="Chen Y."/>
            <person name="Lu G."/>
            <person name="Du J."/>
            <person name="Lin G."/>
        </authorList>
    </citation>
    <scope>INVOLVEMENT IN OZEMA6</scope>
    <scope>SUBCELLULAR LOCATION</scope>
    <scope>FUNCTION</scope>
    <scope>TISSUE SPECIFICITY</scope>
</reference>
<comment type="function">
    <text evidence="8">Component of the zona pellucida, an extracellular matrix surrounding oocytes which mediates sperm binding, induction of the acrosome reaction and prevents post-fertilization polyspermy (PubMed:29895852). The zona pellucida is composed of 3 to 4 glycoproteins, ZP1, ZP2, ZP3, and ZP4. ZP2 may act as a secondary sperm receptor (PubMed:29895852).</text>
</comment>
<comment type="subunit">
    <text evidence="2 7">Can form homopolymers that assemble into long fibers (in vitro). Polymers of ZP2 and ZP3 organized into long filaments cross-linked by ZP1 homodimers (By similarity). Interacts with ZP3 (PubMed:28886344).</text>
</comment>
<comment type="interaction">
    <interactant intactId="EBI-1755919">
        <id>Q05996</id>
    </interactant>
    <interactant intactId="EBI-21280149">
        <id>P10323</id>
        <label>ACR</label>
    </interactant>
    <organismsDiffer>false</organismsDiffer>
    <experiments>4</experiments>
</comment>
<comment type="interaction">
    <interactant intactId="EBI-1755919">
        <id>Q05996</id>
    </interactant>
    <interactant intactId="EBI-11614013">
        <id>P45880-3</id>
        <label>VDAC2</label>
    </interactant>
    <organismsDiffer>false</organismsDiffer>
    <experiments>2</experiments>
</comment>
<comment type="interaction">
    <interactant intactId="EBI-1755919">
        <id>Q05996</id>
    </interactant>
    <interactant intactId="EBI-1755919">
        <id>Q05996</id>
        <label>ZP2</label>
    </interactant>
    <organismsDiffer>false</organismsDiffer>
    <experiments>6</experiments>
</comment>
<comment type="subcellular location">
    <molecule>Processed zona pellucida sperm-binding protein 2</molecule>
    <subcellularLocation>
        <location evidence="8">Zona pellucida</location>
    </subcellularLocation>
</comment>
<comment type="subcellular location">
    <subcellularLocation>
        <location evidence="2">Cell membrane</location>
        <topology evidence="2">Single-pass type I membrane protein</topology>
    </subcellularLocation>
</comment>
<comment type="alternative products">
    <event type="alternative splicing"/>
    <isoform>
        <id>Q05996-1</id>
        <name>1</name>
        <sequence type="displayed"/>
    </isoform>
    <isoform>
        <id>Q05996-2</id>
        <name>2</name>
        <sequence type="described" ref="VSP_054508"/>
    </isoform>
</comment>
<comment type="tissue specificity">
    <text evidence="8">Expressed in occytes(at protein level).</text>
</comment>
<comment type="domain">
    <text evidence="2">The ZP domain is involved in the polymerization of the ZP proteins to form the zona pellucida.</text>
</comment>
<comment type="PTM">
    <text evidence="2">Proteolytically cleaved before the transmembrane segment to yield the secreted ectodomain incorporated in the zona pellucida.</text>
</comment>
<comment type="PTM">
    <text evidence="2">Proteolytically cleaved in the N-terminal part by the metalloendopeptidase ASTL exocytosed from cortical granules after fertilization, yielding a N-terminal peptide of about 30 kDa which remains covalently attached to the C-terminal peptide via disulfide bond(s). This cleavage may play an important role in the post-fertilization block to polyspermy. Additional proteolytically cleavage of the N-terminal peptide of 30 kDa occurs in one-cell and two-cell embryos.</text>
</comment>
<comment type="PTM">
    <text evidence="2">N-glycosylated.</text>
</comment>
<comment type="PTM">
    <text evidence="2">O-glycosylated; contains sulfate-substituted glycans.</text>
</comment>
<comment type="disease" evidence="8">
    <disease id="DI-05501">
        <name>Oocyte/zygote/embryo maturation arrest 6</name>
        <acronym>OZEMA6</acronym>
        <description>An autosomal recessive infertility disorder characterized by oocyte fertilization failure, due to defective sperm-binding to an abnormally thin zona pellucida in patient oocytes.</description>
        <dbReference type="MIM" id="618353"/>
    </disease>
    <text>The disease is caused by variants affecting the gene represented in this entry.</text>
</comment>
<comment type="similarity">
    <text evidence="10">Belongs to the ZP domain family. ZPA subfamily.</text>
</comment>
<evidence type="ECO:0000250" key="1"/>
<evidence type="ECO:0000250" key="2">
    <source>
        <dbReference type="UniProtKB" id="P20239"/>
    </source>
</evidence>
<evidence type="ECO:0000255" key="3"/>
<evidence type="ECO:0000255" key="4">
    <source>
        <dbReference type="PROSITE-ProRule" id="PRU00375"/>
    </source>
</evidence>
<evidence type="ECO:0000256" key="5">
    <source>
        <dbReference type="SAM" id="MobiDB-lite"/>
    </source>
</evidence>
<evidence type="ECO:0000269" key="6">
    <source>
    </source>
</evidence>
<evidence type="ECO:0000269" key="7">
    <source>
    </source>
</evidence>
<evidence type="ECO:0000269" key="8">
    <source>
    </source>
</evidence>
<evidence type="ECO:0000303" key="9">
    <source>
    </source>
</evidence>
<evidence type="ECO:0000305" key="10"/>
<evidence type="ECO:0007829" key="11">
    <source>
        <dbReference type="PDB" id="8RKF"/>
    </source>
</evidence>
<feature type="signal peptide">
    <location>
        <begin position="1"/>
        <end position="38"/>
    </location>
</feature>
<feature type="chain" id="PRO_0000041689" description="Zona pellucida sperm-binding protein 2">
    <location>
        <begin position="39"/>
        <end position="640"/>
    </location>
</feature>
<feature type="chain" id="PRO_0000304559" description="Processed zona pellucida sperm-binding protein 2">
    <location>
        <begin position="39"/>
        <end status="unknown"/>
    </location>
</feature>
<feature type="propeptide" id="PRO_0000041690" description="Removed in mature form" evidence="2">
    <location>
        <begin position="641"/>
        <end position="745"/>
    </location>
</feature>
<feature type="topological domain" description="Extracellular" evidence="3">
    <location>
        <begin position="39"/>
        <end position="716"/>
    </location>
</feature>
<feature type="transmembrane region" description="Helical" evidence="3">
    <location>
        <begin position="717"/>
        <end position="736"/>
    </location>
</feature>
<feature type="topological domain" description="Cytoplasmic" evidence="3">
    <location>
        <begin position="737"/>
        <end position="745"/>
    </location>
</feature>
<feature type="domain" description="ZP" evidence="4">
    <location>
        <begin position="371"/>
        <end position="637"/>
    </location>
</feature>
<feature type="region of interest" description="Disordered" evidence="2">
    <location>
        <begin position="469"/>
        <end position="491"/>
    </location>
</feature>
<feature type="region of interest" description="Disordered" evidence="5">
    <location>
        <begin position="673"/>
        <end position="708"/>
    </location>
</feature>
<feature type="site" description="Cleavage; by ASTL" evidence="2">
    <location>
        <begin position="172"/>
        <end position="173"/>
    </location>
</feature>
<feature type="site" description="Cleavage" evidence="2">
    <location>
        <begin position="640"/>
        <end position="641"/>
    </location>
</feature>
<feature type="glycosylation site" description="N-linked (GlcNAc...) asparagine" evidence="3">
    <location>
        <position position="105"/>
    </location>
</feature>
<feature type="glycosylation site" description="N-linked (GlcNAc...) asparagine" evidence="3">
    <location>
        <position position="122"/>
    </location>
</feature>
<feature type="glycosylation site" description="O-linked (GalNAc...) threonine" evidence="1">
    <location>
        <position position="462"/>
    </location>
</feature>
<feature type="disulfide bond" evidence="2">
    <location>
        <begin position="55"/>
        <end position="138"/>
    </location>
</feature>
<feature type="disulfide bond" evidence="2">
    <location>
        <begin position="88"/>
        <end position="106"/>
    </location>
</feature>
<feature type="disulfide bond" evidence="2">
    <location>
        <begin position="372"/>
        <end position="465"/>
    </location>
</feature>
<feature type="disulfide bond" evidence="2">
    <location>
        <begin position="403"/>
        <end position="424"/>
    </location>
</feature>
<feature type="disulfide bond" evidence="2">
    <location>
        <begin position="545"/>
        <end position="615"/>
    </location>
</feature>
<feature type="disulfide bond" evidence="2">
    <location>
        <begin position="566"/>
        <end position="634"/>
    </location>
</feature>
<feature type="disulfide bond" evidence="2">
    <location>
        <begin position="620"/>
        <end position="630"/>
    </location>
</feature>
<feature type="splice variant" id="VSP_054508" description="In isoform 2." evidence="9">
    <location>
        <begin position="460"/>
        <end position="468"/>
    </location>
</feature>
<feature type="sequence variant" id="VAR_024705" description="In dbSNP:rs2075520." evidence="6">
    <original>G</original>
    <variation>V</variation>
    <location>
        <position position="36"/>
    </location>
</feature>
<feature type="helix" evidence="11">
    <location>
        <begin position="41"/>
        <end position="45"/>
    </location>
</feature>
<feature type="strand" evidence="11">
    <location>
        <begin position="50"/>
        <end position="55"/>
    </location>
</feature>
<feature type="strand" evidence="11">
    <location>
        <begin position="57"/>
        <end position="63"/>
    </location>
</feature>
<feature type="helix" evidence="11">
    <location>
        <begin position="70"/>
        <end position="72"/>
    </location>
</feature>
<feature type="strand" evidence="11">
    <location>
        <begin position="73"/>
        <end position="78"/>
    </location>
</feature>
<feature type="strand" evidence="11">
    <location>
        <begin position="90"/>
        <end position="93"/>
    </location>
</feature>
<feature type="turn" evidence="11">
    <location>
        <begin position="94"/>
        <end position="97"/>
    </location>
</feature>
<feature type="strand" evidence="11">
    <location>
        <begin position="98"/>
        <end position="103"/>
    </location>
</feature>
<feature type="turn" evidence="11">
    <location>
        <begin position="104"/>
        <end position="106"/>
    </location>
</feature>
<feature type="strand" evidence="11">
    <location>
        <begin position="107"/>
        <end position="110"/>
    </location>
</feature>
<feature type="strand" evidence="11">
    <location>
        <begin position="113"/>
        <end position="122"/>
    </location>
</feature>
<feature type="strand" evidence="11">
    <location>
        <begin position="131"/>
        <end position="139"/>
    </location>
</feature>
<feature type="strand" evidence="11">
    <location>
        <begin position="153"/>
        <end position="155"/>
    </location>
</feature>
<feature type="strand" evidence="11">
    <location>
        <begin position="157"/>
        <end position="165"/>
    </location>
</feature>
<feature type="strand" evidence="11">
    <location>
        <begin position="181"/>
        <end position="187"/>
    </location>
</feature>
<feature type="strand" evidence="11">
    <location>
        <begin position="189"/>
        <end position="192"/>
    </location>
</feature>
<feature type="helix" evidence="11">
    <location>
        <begin position="199"/>
        <end position="204"/>
    </location>
</feature>
<feature type="strand" evidence="11">
    <location>
        <begin position="208"/>
        <end position="211"/>
    </location>
</feature>
<feature type="strand" evidence="11">
    <location>
        <begin position="213"/>
        <end position="221"/>
    </location>
</feature>
<feature type="strand" evidence="11">
    <location>
        <begin position="227"/>
        <end position="232"/>
    </location>
</feature>
<feature type="strand" evidence="11">
    <location>
        <begin position="235"/>
        <end position="248"/>
    </location>
</feature>
<feature type="strand" evidence="11">
    <location>
        <begin position="251"/>
        <end position="261"/>
    </location>
</feature>
<keyword id="KW-0002">3D-structure</keyword>
<keyword id="KW-0025">Alternative splicing</keyword>
<keyword id="KW-1003">Cell membrane</keyword>
<keyword id="KW-0165">Cleavage on pair of basic residues</keyword>
<keyword id="KW-1015">Disulfide bond</keyword>
<keyword id="KW-0272">Extracellular matrix</keyword>
<keyword id="KW-0278">Fertilization</keyword>
<keyword id="KW-0325">Glycoprotein</keyword>
<keyword id="KW-0472">Membrane</keyword>
<keyword id="KW-1267">Proteomics identification</keyword>
<keyword id="KW-0675">Receptor</keyword>
<keyword id="KW-1185">Reference proteome</keyword>
<keyword id="KW-0964">Secreted</keyword>
<keyword id="KW-0732">Signal</keyword>
<keyword id="KW-0812">Transmembrane</keyword>
<keyword id="KW-1133">Transmembrane helix</keyword>
<proteinExistence type="evidence at protein level"/>
<sequence>MACRQRGGSWSPSGWFNAGWSTYRSISLFFALVTSGNSIDVSQLVNPAFPGTVTCDEREITVEFPSSPGTKKWHASVVDPLGLDMPNCTYILDPEKLTLRATYDNCTRRVHGGHQMTIRVMNNSAALRHGAVMYQFFCPAMQVEETQGLSASTICQKDFMSFSLPRVFSGLADDSKGTKVQMGWSIEVGDGARAKTLTLPEAMKEGFSLLIDNHRMTFHVPFNATGVTHYVQGNSHLYMVSLKLTFISPGQKVIFSSQAICAPDPVTCNATHMTLTIPEFPGKLKSVSFENQNIDVSQLHDNGIDLEATNGMKLHFSKTLLKTKLSEKCLLHQFYLASLKLTFLLRPETVSMVIYPECLCESPVSIVTGELCTQDGFMDVEVYSYQTQPALDLGTLRVGNSSCQPVFEAQSQGLVRFHIPLNGCGTRYKFEDDKVVYENEIHALWTDFPPSKISRDSEFRMTVKCSYSRNDMLLNINVESLTPPVASVKLGPFTLILQSYPDNSYQQPYGENEYPLVRFLRQPIYMEVRVLNRDDPNIKLVLDDCWATSTMDPDSFPQWNVVVDGCAYDLDNYQTTFHPVGSSVTHPDHYQRFDMKAFAFVSEAHVLSSLVYFHCSALICNRLSPDSPLCSVTCPVSSRHRRATGATEAEKMTVSLPGPILLLSDDSSFRGVGSSDLKASGSSGEKSRSETGEEVGSRGAMDTKGHKTAGDVGSKAVAAVAAFAGVVATLGFIYYLYEKRTVSNH</sequence>
<gene>
    <name type="primary">ZP2</name>
    <name type="synonym">ZPA</name>
</gene>
<dbReference type="EMBL" id="M90366">
    <property type="protein sequence ID" value="AAA61335.1"/>
    <property type="molecule type" value="mRNA"/>
</dbReference>
<dbReference type="EMBL" id="AK313003">
    <property type="protein sequence ID" value="BAG35839.1"/>
    <property type="molecule type" value="mRNA"/>
</dbReference>
<dbReference type="EMBL" id="AF001550">
    <property type="protein sequence ID" value="AAB67599.1"/>
    <property type="molecule type" value="Genomic_DNA"/>
</dbReference>
<dbReference type="EMBL" id="CH471228">
    <property type="protein sequence ID" value="EAW66859.1"/>
    <property type="molecule type" value="Genomic_DNA"/>
</dbReference>
<dbReference type="EMBL" id="BC096304">
    <property type="protein sequence ID" value="AAH96304.1"/>
    <property type="molecule type" value="mRNA"/>
</dbReference>
<dbReference type="EMBL" id="BC096305">
    <property type="protein sequence ID" value="AAH96305.1"/>
    <property type="molecule type" value="mRNA"/>
</dbReference>
<dbReference type="EMBL" id="BC096306">
    <property type="protein sequence ID" value="AAH96306.1"/>
    <property type="molecule type" value="mRNA"/>
</dbReference>
<dbReference type="EMBL" id="BC096307">
    <property type="protein sequence ID" value="AAH96307.1"/>
    <property type="molecule type" value="mRNA"/>
</dbReference>
<dbReference type="CCDS" id="CCDS10596.1">
    <molecule id="Q05996-1"/>
</dbReference>
<dbReference type="PIR" id="A48833">
    <property type="entry name" value="A48833"/>
</dbReference>
<dbReference type="RefSeq" id="NP_001277033.1">
    <property type="nucleotide sequence ID" value="NM_001290104.1"/>
</dbReference>
<dbReference type="RefSeq" id="NP_001363160.1">
    <molecule id="Q05996-2"/>
    <property type="nucleotide sequence ID" value="NM_001376231.1"/>
</dbReference>
<dbReference type="RefSeq" id="NP_001363161.1">
    <molecule id="Q05996-1"/>
    <property type="nucleotide sequence ID" value="NM_001376232.1"/>
</dbReference>
<dbReference type="RefSeq" id="NP_003451.1">
    <molecule id="Q05996-1"/>
    <property type="nucleotide sequence ID" value="NM_003460.2"/>
</dbReference>
<dbReference type="PDB" id="8RKE">
    <property type="method" value="X-ray"/>
    <property type="resolution" value="2.70 A"/>
    <property type="chains" value="A/B/C=39-365"/>
</dbReference>
<dbReference type="PDB" id="8RKF">
    <property type="method" value="X-ray"/>
    <property type="resolution" value="3.20 A"/>
    <property type="chains" value="A/B=39-265"/>
</dbReference>
<dbReference type="PDBsum" id="8RKE"/>
<dbReference type="PDBsum" id="8RKF"/>
<dbReference type="SMR" id="Q05996"/>
<dbReference type="BioGRID" id="113564">
    <property type="interactions" value="19"/>
</dbReference>
<dbReference type="FunCoup" id="Q05996">
    <property type="interactions" value="36"/>
</dbReference>
<dbReference type="IntAct" id="Q05996">
    <property type="interactions" value="18"/>
</dbReference>
<dbReference type="MINT" id="Q05996"/>
<dbReference type="STRING" id="9606.ENSP00000460971"/>
<dbReference type="GlyCosmos" id="Q05996">
    <property type="glycosylation" value="3 sites, No reported glycans"/>
</dbReference>
<dbReference type="GlyGen" id="Q05996">
    <property type="glycosylation" value="3 sites"/>
</dbReference>
<dbReference type="iPTMnet" id="Q05996"/>
<dbReference type="PhosphoSitePlus" id="Q05996"/>
<dbReference type="BioMuta" id="ZP2"/>
<dbReference type="DMDM" id="466206"/>
<dbReference type="MassIVE" id="Q05996"/>
<dbReference type="PaxDb" id="9606-ENSP00000460971"/>
<dbReference type="PeptideAtlas" id="Q05996"/>
<dbReference type="ProteomicsDB" id="58364">
    <molecule id="Q05996-1"/>
</dbReference>
<dbReference type="ProteomicsDB" id="62288"/>
<dbReference type="Antibodypedia" id="2312">
    <property type="antibodies" value="129 antibodies from 24 providers"/>
</dbReference>
<dbReference type="DNASU" id="7783"/>
<dbReference type="Ensembl" id="ENST00000574002.1">
    <molecule id="Q05996-1"/>
    <property type="protein sequence ID" value="ENSP00000460971.1"/>
    <property type="gene ID" value="ENSG00000103310.11"/>
</dbReference>
<dbReference type="Ensembl" id="ENST00000574091.6">
    <molecule id="Q05996-1"/>
    <property type="protein sequence ID" value="ENSP00000458991.2"/>
    <property type="gene ID" value="ENSG00000103310.11"/>
</dbReference>
<dbReference type="Ensembl" id="ENST00000638300.1">
    <molecule id="Q05996-1"/>
    <property type="protein sequence ID" value="ENSP00000492703.1"/>
    <property type="gene ID" value="ENSG00000284588.3"/>
</dbReference>
<dbReference type="Ensembl" id="ENST00000640487.3">
    <molecule id="Q05996-2"/>
    <property type="protein sequence ID" value="ENSP00000491583.3"/>
    <property type="gene ID" value="ENSG00000284588.3"/>
</dbReference>
<dbReference type="GeneID" id="7783"/>
<dbReference type="KEGG" id="hsa:7783"/>
<dbReference type="MANE-Select" id="ENST00000574091.6">
    <property type="protein sequence ID" value="ENSP00000458991.2"/>
    <property type="RefSeq nucleotide sequence ID" value="NM_001376232.1"/>
    <property type="RefSeq protein sequence ID" value="NP_001363161.1"/>
</dbReference>
<dbReference type="UCSC" id="uc002dii.3">
    <molecule id="Q05996-1"/>
    <property type="organism name" value="human"/>
</dbReference>
<dbReference type="AGR" id="HGNC:13188"/>
<dbReference type="CTD" id="7783"/>
<dbReference type="DisGeNET" id="7783"/>
<dbReference type="GeneCards" id="ZP2"/>
<dbReference type="HGNC" id="HGNC:13188">
    <property type="gene designation" value="ZP2"/>
</dbReference>
<dbReference type="HPA" id="ENSG00000103310">
    <property type="expression patterns" value="Tissue enriched (brain)"/>
</dbReference>
<dbReference type="MalaCards" id="ZP2"/>
<dbReference type="MIM" id="182888">
    <property type="type" value="gene"/>
</dbReference>
<dbReference type="MIM" id="618353">
    <property type="type" value="phenotype"/>
</dbReference>
<dbReference type="neXtProt" id="NX_Q05996"/>
<dbReference type="OpenTargets" id="ENSG00000103310"/>
<dbReference type="Orphanet" id="404466">
    <property type="disease" value="Female infertility due to zona pellucida defect"/>
</dbReference>
<dbReference type="PharmGKB" id="PA37756"/>
<dbReference type="VEuPathDB" id="HostDB:ENSG00000103310"/>
<dbReference type="eggNOG" id="ENOG502QPI2">
    <property type="taxonomic scope" value="Eukaryota"/>
</dbReference>
<dbReference type="GeneTree" id="ENSGT00940000160133"/>
<dbReference type="HOGENOM" id="CLU_024386_0_0_1"/>
<dbReference type="InParanoid" id="Q05996"/>
<dbReference type="OMA" id="RPYGDKE"/>
<dbReference type="OrthoDB" id="9903747at2759"/>
<dbReference type="PAN-GO" id="Q05996">
    <property type="GO annotations" value="6 GO annotations based on evolutionary models"/>
</dbReference>
<dbReference type="PhylomeDB" id="Q05996"/>
<dbReference type="TreeFam" id="TF332794"/>
<dbReference type="PathwayCommons" id="Q05996"/>
<dbReference type="Reactome" id="R-HSA-2534343">
    <property type="pathway name" value="Interaction With Cumulus Cells And The Zona Pellucida"/>
</dbReference>
<dbReference type="SignaLink" id="Q05996"/>
<dbReference type="BioGRID-ORCS" id="7783">
    <property type="hits" value="15 hits in 1142 CRISPR screens"/>
</dbReference>
<dbReference type="GeneWiki" id="ZP2"/>
<dbReference type="GenomeRNAi" id="7783"/>
<dbReference type="Pharos" id="Q05996">
    <property type="development level" value="Tbio"/>
</dbReference>
<dbReference type="PRO" id="PR:Q05996"/>
<dbReference type="Proteomes" id="UP000005640">
    <property type="component" value="Chromosome 16"/>
</dbReference>
<dbReference type="RNAct" id="Q05996">
    <property type="molecule type" value="protein"/>
</dbReference>
<dbReference type="Bgee" id="ENSG00000103310">
    <property type="expression patterns" value="Expressed in cerebellar cortex and 47 other cell types or tissues"/>
</dbReference>
<dbReference type="GO" id="GO:0062023">
    <property type="term" value="C:collagen-containing extracellular matrix"/>
    <property type="evidence" value="ECO:0000250"/>
    <property type="project" value="UniProtKB"/>
</dbReference>
<dbReference type="GO" id="GO:0035805">
    <property type="term" value="C:egg coat"/>
    <property type="evidence" value="ECO:0000314"/>
    <property type="project" value="UniProtKB"/>
</dbReference>
<dbReference type="GO" id="GO:0005783">
    <property type="term" value="C:endoplasmic reticulum"/>
    <property type="evidence" value="ECO:0000250"/>
    <property type="project" value="UniProtKB"/>
</dbReference>
<dbReference type="GO" id="GO:0005576">
    <property type="term" value="C:extracellular region"/>
    <property type="evidence" value="ECO:0000304"/>
    <property type="project" value="Reactome"/>
</dbReference>
<dbReference type="GO" id="GO:0005771">
    <property type="term" value="C:multivesicular body"/>
    <property type="evidence" value="ECO:0000250"/>
    <property type="project" value="UniProtKB"/>
</dbReference>
<dbReference type="GO" id="GO:0005886">
    <property type="term" value="C:plasma membrane"/>
    <property type="evidence" value="ECO:0000250"/>
    <property type="project" value="UniProtKB"/>
</dbReference>
<dbReference type="GO" id="GO:0032190">
    <property type="term" value="F:acrosin binding"/>
    <property type="evidence" value="ECO:0000353"/>
    <property type="project" value="UniProtKB"/>
</dbReference>
<dbReference type="GO" id="GO:0015026">
    <property type="term" value="F:coreceptor activity"/>
    <property type="evidence" value="ECO:0000304"/>
    <property type="project" value="ProtInc"/>
</dbReference>
<dbReference type="GO" id="GO:0042802">
    <property type="term" value="F:identical protein binding"/>
    <property type="evidence" value="ECO:0000353"/>
    <property type="project" value="IntAct"/>
</dbReference>
<dbReference type="GO" id="GO:0035804">
    <property type="term" value="F:structural constituent of egg coat"/>
    <property type="evidence" value="ECO:0000315"/>
    <property type="project" value="UniProtKB"/>
</dbReference>
<dbReference type="GO" id="GO:0007339">
    <property type="term" value="P:binding of sperm to zona pellucida"/>
    <property type="evidence" value="ECO:0000250"/>
    <property type="project" value="UniProtKB"/>
</dbReference>
<dbReference type="GO" id="GO:0060468">
    <property type="term" value="P:prevention of polyspermy"/>
    <property type="evidence" value="ECO:0000250"/>
    <property type="project" value="UniProtKB"/>
</dbReference>
<dbReference type="FunFam" id="2.60.40.3210:FF:000006">
    <property type="entry name" value="Zona pellucida sperm-binding protein 2"/>
    <property type="match status" value="1"/>
</dbReference>
<dbReference type="FunFam" id="2.60.40.4100:FF:000004">
    <property type="entry name" value="Zona pellucida sperm-binding protein 2"/>
    <property type="match status" value="1"/>
</dbReference>
<dbReference type="Gene3D" id="2.60.40.4100">
    <property type="entry name" value="Zona pellucida, ZP-C domain"/>
    <property type="match status" value="1"/>
</dbReference>
<dbReference type="Gene3D" id="2.60.40.3210">
    <property type="entry name" value="Zona pellucida, ZP-N domain"/>
    <property type="match status" value="1"/>
</dbReference>
<dbReference type="InterPro" id="IPR051148">
    <property type="entry name" value="Zona_Pellucida_Domain_gp"/>
</dbReference>
<dbReference type="InterPro" id="IPR055355">
    <property type="entry name" value="ZP-C"/>
</dbReference>
<dbReference type="InterPro" id="IPR042235">
    <property type="entry name" value="ZP-C_dom"/>
</dbReference>
<dbReference type="InterPro" id="IPR055356">
    <property type="entry name" value="ZP-N"/>
</dbReference>
<dbReference type="InterPro" id="IPR048290">
    <property type="entry name" value="ZP_chr"/>
</dbReference>
<dbReference type="InterPro" id="IPR001507">
    <property type="entry name" value="ZP_dom"/>
</dbReference>
<dbReference type="InterPro" id="IPR017977">
    <property type="entry name" value="ZP_dom_CS"/>
</dbReference>
<dbReference type="PANTHER" id="PTHR23343">
    <property type="entry name" value="ZONA PELLUCIDA SPERM-BINDING PROTEIN"/>
    <property type="match status" value="1"/>
</dbReference>
<dbReference type="PANTHER" id="PTHR23343:SF4">
    <property type="entry name" value="ZONA PELLUCIDA SPERM-BINDING PROTEIN 2"/>
    <property type="match status" value="1"/>
</dbReference>
<dbReference type="Pfam" id="PF23736">
    <property type="entry name" value="Ig_ZP2"/>
    <property type="match status" value="1"/>
</dbReference>
<dbReference type="Pfam" id="PF23740">
    <property type="entry name" value="Ig_ZP2_3rd"/>
    <property type="match status" value="1"/>
</dbReference>
<dbReference type="Pfam" id="PF23738">
    <property type="entry name" value="Ig_ZP2_N"/>
    <property type="match status" value="1"/>
</dbReference>
<dbReference type="Pfam" id="PF00100">
    <property type="entry name" value="Zona_pellucida"/>
    <property type="match status" value="1"/>
</dbReference>
<dbReference type="Pfam" id="PF23344">
    <property type="entry name" value="ZP-N"/>
    <property type="match status" value="1"/>
</dbReference>
<dbReference type="PRINTS" id="PR00023">
    <property type="entry name" value="ZPELLUCIDA"/>
</dbReference>
<dbReference type="SMART" id="SM00241">
    <property type="entry name" value="ZP"/>
    <property type="match status" value="1"/>
</dbReference>
<dbReference type="PROSITE" id="PS00682">
    <property type="entry name" value="ZP_1"/>
    <property type="match status" value="1"/>
</dbReference>
<dbReference type="PROSITE" id="PS51034">
    <property type="entry name" value="ZP_2"/>
    <property type="match status" value="1"/>
</dbReference>
<name>ZP2_HUMAN</name>
<accession>Q05996</accession>
<accession>B2R7J2</accession>
<accession>Q4VAN9</accession>
<accession>Q4VAP0</accession>
<accession>Q4VAP1</accession>